<evidence type="ECO:0000255" key="1">
    <source>
        <dbReference type="PROSITE-ProRule" id="PRU00042"/>
    </source>
</evidence>
<evidence type="ECO:0000255" key="2">
    <source>
        <dbReference type="PROSITE-ProRule" id="PRU01263"/>
    </source>
</evidence>
<evidence type="ECO:0000256" key="3">
    <source>
        <dbReference type="SAM" id="MobiDB-lite"/>
    </source>
</evidence>
<evidence type="ECO:0000269" key="4">
    <source>
    </source>
</evidence>
<evidence type="ECO:0000269" key="5">
    <source>
    </source>
</evidence>
<evidence type="ECO:0000303" key="6">
    <source>
    </source>
</evidence>
<evidence type="ECO:0000303" key="7">
    <source>
    </source>
</evidence>
<evidence type="ECO:0000305" key="8"/>
<evidence type="ECO:0000312" key="9">
    <source>
        <dbReference type="EMBL" id="AAF52681.2"/>
    </source>
</evidence>
<evidence type="ECO:0000312" key="10">
    <source>
        <dbReference type="EMBL" id="ABF17908.1"/>
    </source>
</evidence>
<evidence type="ECO:0000312" key="11">
    <source>
        <dbReference type="FlyBase" id="FBgn0285971"/>
    </source>
</evidence>
<evidence type="ECO:0000312" key="12">
    <source>
        <dbReference type="Proteomes" id="UP000000803"/>
    </source>
</evidence>
<accession>Q9VLK8</accession>
<comment type="function">
    <text evidence="4 5 6">May be involved in transcriptional regulation (PubMed:28011160). The function of this protein is unclear (PubMed:28011160, PubMed:34962606). According to one report, it is required for development and viability since mutants display defects in several developmental morphogenetic processes including dorsal closure and head involution, and die by the first instar larval stage (PubMed:28011160). It may also be involved in fwe-mediated cellular competition (PubMed:28011160). However, according to another report, it is not required for development or viability since mutants have no visible phenotype and are fertile (PubMed:34962606).</text>
</comment>
<comment type="developmental stage">
    <text evidence="4 5">Detected in embryos (at protein level) (PubMed:28011160, PubMed:34962606). In non-cellularized embryos, expressed in the ectoderm (at protein level) (PubMed:28011160). Expressed in the germband during germband extension and retraction, and, later, in the mesoderm as well during dorsal closure (at protein level) (PubMed:28011160). At the end of embryogenesis, also detected in the endoderm (at protein level) (PubMed:28011160). In third instar larvae imaginal tissue, expressed in the wing, eye-antenna, and leg disks (PubMed:28011160). In the eye-antennal disk, expression is highest in the eye portion of the disk, particularly in undifferentiated cells ahead of the morphogenetic furrow (PubMed:28011160).</text>
</comment>
<comment type="disruption phenotype">
    <text evidence="5">No visible phenotype (PubMed:34962606). No effect on cuticle pigmentation, bristle and hair distribution and size, shape of tergites and sternites, size and constitution of eyes and wings, or fertility and survival of males and females (PubMed:34962606).</text>
</comment>
<comment type="miscellaneous">
    <text evidence="6">Piragua means small boat in Spanish and refers to the small number of mutant embryos that have a hole in the dorsal aspect of the cuticle and thus resemble such a vessel.</text>
</comment>
<protein>
    <recommendedName>
        <fullName evidence="6">Zinc finger protein piragua</fullName>
    </recommendedName>
    <alternativeName>
        <fullName evidence="7">Zinc finger protein fu2</fullName>
    </alternativeName>
</protein>
<reference evidence="12" key="1">
    <citation type="journal article" date="2000" name="Science">
        <title>The genome sequence of Drosophila melanogaster.</title>
        <authorList>
            <person name="Adams M.D."/>
            <person name="Celniker S.E."/>
            <person name="Holt R.A."/>
            <person name="Evans C.A."/>
            <person name="Gocayne J.D."/>
            <person name="Amanatides P.G."/>
            <person name="Scherer S.E."/>
            <person name="Li P.W."/>
            <person name="Hoskins R.A."/>
            <person name="Galle R.F."/>
            <person name="George R.A."/>
            <person name="Lewis S.E."/>
            <person name="Richards S."/>
            <person name="Ashburner M."/>
            <person name="Henderson S.N."/>
            <person name="Sutton G.G."/>
            <person name="Wortman J.R."/>
            <person name="Yandell M.D."/>
            <person name="Zhang Q."/>
            <person name="Chen L.X."/>
            <person name="Brandon R.C."/>
            <person name="Rogers Y.-H.C."/>
            <person name="Blazej R.G."/>
            <person name="Champe M."/>
            <person name="Pfeiffer B.D."/>
            <person name="Wan K.H."/>
            <person name="Doyle C."/>
            <person name="Baxter E.G."/>
            <person name="Helt G."/>
            <person name="Nelson C.R."/>
            <person name="Miklos G.L.G."/>
            <person name="Abril J.F."/>
            <person name="Agbayani A."/>
            <person name="An H.-J."/>
            <person name="Andrews-Pfannkoch C."/>
            <person name="Baldwin D."/>
            <person name="Ballew R.M."/>
            <person name="Basu A."/>
            <person name="Baxendale J."/>
            <person name="Bayraktaroglu L."/>
            <person name="Beasley E.M."/>
            <person name="Beeson K.Y."/>
            <person name="Benos P.V."/>
            <person name="Berman B.P."/>
            <person name="Bhandari D."/>
            <person name="Bolshakov S."/>
            <person name="Borkova D."/>
            <person name="Botchan M.R."/>
            <person name="Bouck J."/>
            <person name="Brokstein P."/>
            <person name="Brottier P."/>
            <person name="Burtis K.C."/>
            <person name="Busam D.A."/>
            <person name="Butler H."/>
            <person name="Cadieu E."/>
            <person name="Center A."/>
            <person name="Chandra I."/>
            <person name="Cherry J.M."/>
            <person name="Cawley S."/>
            <person name="Dahlke C."/>
            <person name="Davenport L.B."/>
            <person name="Davies P."/>
            <person name="de Pablos B."/>
            <person name="Delcher A."/>
            <person name="Deng Z."/>
            <person name="Mays A.D."/>
            <person name="Dew I."/>
            <person name="Dietz S.M."/>
            <person name="Dodson K."/>
            <person name="Doup L.E."/>
            <person name="Downes M."/>
            <person name="Dugan-Rocha S."/>
            <person name="Dunkov B.C."/>
            <person name="Dunn P."/>
            <person name="Durbin K.J."/>
            <person name="Evangelista C.C."/>
            <person name="Ferraz C."/>
            <person name="Ferriera S."/>
            <person name="Fleischmann W."/>
            <person name="Fosler C."/>
            <person name="Gabrielian A.E."/>
            <person name="Garg N.S."/>
            <person name="Gelbart W.M."/>
            <person name="Glasser K."/>
            <person name="Glodek A."/>
            <person name="Gong F."/>
            <person name="Gorrell J.H."/>
            <person name="Gu Z."/>
            <person name="Guan P."/>
            <person name="Harris M."/>
            <person name="Harris N.L."/>
            <person name="Harvey D.A."/>
            <person name="Heiman T.J."/>
            <person name="Hernandez J.R."/>
            <person name="Houck J."/>
            <person name="Hostin D."/>
            <person name="Houston K.A."/>
            <person name="Howland T.J."/>
            <person name="Wei M.-H."/>
            <person name="Ibegwam C."/>
            <person name="Jalali M."/>
            <person name="Kalush F."/>
            <person name="Karpen G.H."/>
            <person name="Ke Z."/>
            <person name="Kennison J.A."/>
            <person name="Ketchum K.A."/>
            <person name="Kimmel B.E."/>
            <person name="Kodira C.D."/>
            <person name="Kraft C.L."/>
            <person name="Kravitz S."/>
            <person name="Kulp D."/>
            <person name="Lai Z."/>
            <person name="Lasko P."/>
            <person name="Lei Y."/>
            <person name="Levitsky A.A."/>
            <person name="Li J.H."/>
            <person name="Li Z."/>
            <person name="Liang Y."/>
            <person name="Lin X."/>
            <person name="Liu X."/>
            <person name="Mattei B."/>
            <person name="McIntosh T.C."/>
            <person name="McLeod M.P."/>
            <person name="McPherson D."/>
            <person name="Merkulov G."/>
            <person name="Milshina N.V."/>
            <person name="Mobarry C."/>
            <person name="Morris J."/>
            <person name="Moshrefi A."/>
            <person name="Mount S.M."/>
            <person name="Moy M."/>
            <person name="Murphy B."/>
            <person name="Murphy L."/>
            <person name="Muzny D.M."/>
            <person name="Nelson D.L."/>
            <person name="Nelson D.R."/>
            <person name="Nelson K.A."/>
            <person name="Nixon K."/>
            <person name="Nusskern D.R."/>
            <person name="Pacleb J.M."/>
            <person name="Palazzolo M."/>
            <person name="Pittman G.S."/>
            <person name="Pan S."/>
            <person name="Pollard J."/>
            <person name="Puri V."/>
            <person name="Reese M.G."/>
            <person name="Reinert K."/>
            <person name="Remington K."/>
            <person name="Saunders R.D.C."/>
            <person name="Scheeler F."/>
            <person name="Shen H."/>
            <person name="Shue B.C."/>
            <person name="Siden-Kiamos I."/>
            <person name="Simpson M."/>
            <person name="Skupski M.P."/>
            <person name="Smith T.J."/>
            <person name="Spier E."/>
            <person name="Spradling A.C."/>
            <person name="Stapleton M."/>
            <person name="Strong R."/>
            <person name="Sun E."/>
            <person name="Svirskas R."/>
            <person name="Tector C."/>
            <person name="Turner R."/>
            <person name="Venter E."/>
            <person name="Wang A.H."/>
            <person name="Wang X."/>
            <person name="Wang Z.-Y."/>
            <person name="Wassarman D.A."/>
            <person name="Weinstock G.M."/>
            <person name="Weissenbach J."/>
            <person name="Williams S.M."/>
            <person name="Woodage T."/>
            <person name="Worley K.C."/>
            <person name="Wu D."/>
            <person name="Yang S."/>
            <person name="Yao Q.A."/>
            <person name="Ye J."/>
            <person name="Yeh R.-F."/>
            <person name="Zaveri J.S."/>
            <person name="Zhan M."/>
            <person name="Zhang G."/>
            <person name="Zhao Q."/>
            <person name="Zheng L."/>
            <person name="Zheng X.H."/>
            <person name="Zhong F.N."/>
            <person name="Zhong W."/>
            <person name="Zhou X."/>
            <person name="Zhu S.C."/>
            <person name="Zhu X."/>
            <person name="Smith H.O."/>
            <person name="Gibbs R.A."/>
            <person name="Myers E.W."/>
            <person name="Rubin G.M."/>
            <person name="Venter J.C."/>
        </authorList>
    </citation>
    <scope>NUCLEOTIDE SEQUENCE [LARGE SCALE GENOMIC DNA]</scope>
    <source>
        <strain evidence="12">Berkeley</strain>
    </source>
</reference>
<reference evidence="12" key="2">
    <citation type="journal article" date="2002" name="Genome Biol.">
        <title>Annotation of the Drosophila melanogaster euchromatic genome: a systematic review.</title>
        <authorList>
            <person name="Misra S."/>
            <person name="Crosby M.A."/>
            <person name="Mungall C.J."/>
            <person name="Matthews B.B."/>
            <person name="Campbell K.S."/>
            <person name="Hradecky P."/>
            <person name="Huang Y."/>
            <person name="Kaminker J.S."/>
            <person name="Millburn G.H."/>
            <person name="Prochnik S.E."/>
            <person name="Smith C.D."/>
            <person name="Tupy J.L."/>
            <person name="Whitfield E.J."/>
            <person name="Bayraktaroglu L."/>
            <person name="Berman B.P."/>
            <person name="Bettencourt B.R."/>
            <person name="Celniker S.E."/>
            <person name="de Grey A.D.N.J."/>
            <person name="Drysdale R.A."/>
            <person name="Harris N.L."/>
            <person name="Richter J."/>
            <person name="Russo S."/>
            <person name="Schroeder A.J."/>
            <person name="Shu S.Q."/>
            <person name="Stapleton M."/>
            <person name="Yamada C."/>
            <person name="Ashburner M."/>
            <person name="Gelbart W.M."/>
            <person name="Rubin G.M."/>
            <person name="Lewis S.E."/>
        </authorList>
    </citation>
    <scope>GENOME REANNOTATION</scope>
    <source>
        <strain evidence="12">Berkeley</strain>
    </source>
</reference>
<reference evidence="10" key="3">
    <citation type="submission" date="2007-02" db="EMBL/GenBank/DDBJ databases">
        <authorList>
            <person name="Stapleton M."/>
            <person name="Carlson J."/>
            <person name="Frise E."/>
            <person name="Kapadia B."/>
            <person name="Park S."/>
            <person name="Wan K."/>
            <person name="Yu C."/>
            <person name="Celniker S."/>
        </authorList>
    </citation>
    <scope>NUCLEOTIDE SEQUENCE [LARGE SCALE MRNA]</scope>
</reference>
<reference evidence="8" key="4">
    <citation type="journal article" date="2017" name="Mech. Dev.">
        <title>piragua encodes a zinc finger protein required for development in Drosophila.</title>
        <authorList>
            <person name="Nazario-Yepiz N.O."/>
            <person name="Riesgo-Escovar J.R."/>
        </authorList>
    </citation>
    <scope>FUNCTION</scope>
    <scope>DEVELOPMENTAL STAGE</scope>
</reference>
<reference evidence="8" key="5">
    <citation type="journal article" date="2021" name="Dokl. Biol. Sci.">
        <title>The Piragua Gene Is not Essential for Drosophila Development.</title>
        <authorList>
            <person name="Sokolov V.V."/>
            <person name="Georgiev P.G."/>
            <person name="Kyrchanova O.V."/>
        </authorList>
    </citation>
    <scope>FUNCTION</scope>
    <scope>DEVELOPMENTAL STAGE</scope>
    <scope>DISRUPTION PHENOTYPE</scope>
</reference>
<name>PIRAG_DROME</name>
<sequence length="558" mass="63856">MHTSDISMTQDQDVSTCRLCHHNTDPNSLNIFDDTVQFCKDVSIAEVSKSLWSVQYDRNECLSELICSRCLEILEEAFELRKGMQEREQSLQEQLKEMIKDHPKHRPGLNGNPGVFVPEEGCIIVEVDPENLAESSEEEFALGSDGEYENYDDDDEEEEEDYDEEDEEDGQNGEDVDMPLGMDAAQMAAQQSVANNANTTEARPKRAFLCQYCDLGFTLPAECQEHELAAHDPNAPYCCNFCNIKLVTRPALISHIKTLHDPDRPYVCAHCRKGFVRRSDLKKHTIVHTGVRPFTCNVCSKSFSRNTNLTKHMRIHSGVKPFVCQQCPRSFQTAVEMMRHTRSHGEVKAFQCGRCPYSFSRRDKLIAHQQVHTRRDMEQQQQMGLIPPMEGDLQQQALQAKQKAAAQTKNSRYYHCDVCDRTFQRERDLQRHQALHMDSLFACKTCNQGFNRREQLQRHELEAHGPSFTCGICCISFLHQIELENHLKVHQLQHKMAQRAQEAAILPLKMAEKAPVAMTAPLVQDPQLVRPSAAELSFYSNMIPTMNLGFYSETRPEE</sequence>
<proteinExistence type="evidence at protein level"/>
<keyword id="KW-0479">Metal-binding</keyword>
<keyword id="KW-1185">Reference proteome</keyword>
<keyword id="KW-0677">Repeat</keyword>
<keyword id="KW-0862">Zinc</keyword>
<keyword id="KW-0863">Zinc-finger</keyword>
<organism evidence="12">
    <name type="scientific">Drosophila melanogaster</name>
    <name type="common">Fruit fly</name>
    <dbReference type="NCBI Taxonomy" id="7227"/>
    <lineage>
        <taxon>Eukaryota</taxon>
        <taxon>Metazoa</taxon>
        <taxon>Ecdysozoa</taxon>
        <taxon>Arthropoda</taxon>
        <taxon>Hexapoda</taxon>
        <taxon>Insecta</taxon>
        <taxon>Pterygota</taxon>
        <taxon>Neoptera</taxon>
        <taxon>Endopterygota</taxon>
        <taxon>Diptera</taxon>
        <taxon>Brachycera</taxon>
        <taxon>Muscomorpha</taxon>
        <taxon>Ephydroidea</taxon>
        <taxon>Drosophilidae</taxon>
        <taxon>Drosophila</taxon>
        <taxon>Sophophora</taxon>
    </lineage>
</organism>
<dbReference type="EMBL" id="AE014134">
    <property type="protein sequence ID" value="AAF52681.2"/>
    <property type="molecule type" value="Genomic_DNA"/>
</dbReference>
<dbReference type="EMBL" id="AE014134">
    <property type="protein sequence ID" value="AGB92789.1"/>
    <property type="molecule type" value="Genomic_DNA"/>
</dbReference>
<dbReference type="EMBL" id="BT025217">
    <property type="protein sequence ID" value="ABF17908.1"/>
    <property type="molecule type" value="mRNA"/>
</dbReference>
<dbReference type="RefSeq" id="NP_001260253.1">
    <property type="nucleotide sequence ID" value="NM_001273324.2"/>
</dbReference>
<dbReference type="RefSeq" id="NP_609232.2">
    <property type="nucleotide sequence ID" value="NM_135388.5"/>
</dbReference>
<dbReference type="SMR" id="Q9VLK8"/>
<dbReference type="FunCoup" id="Q9VLK8">
    <property type="interactions" value="17"/>
</dbReference>
<dbReference type="IntAct" id="Q9VLK8">
    <property type="interactions" value="8"/>
</dbReference>
<dbReference type="STRING" id="7227.FBpp0304330"/>
<dbReference type="PaxDb" id="7227-FBpp0304330"/>
<dbReference type="DNASU" id="34177"/>
<dbReference type="EnsemblMetazoa" id="FBtr0079674">
    <property type="protein sequence ID" value="FBpp0079289"/>
    <property type="gene ID" value="FBgn0285971"/>
</dbReference>
<dbReference type="EnsemblMetazoa" id="FBtr0332008">
    <property type="protein sequence ID" value="FBpp0304330"/>
    <property type="gene ID" value="FBgn0285971"/>
</dbReference>
<dbReference type="GeneID" id="34177"/>
<dbReference type="KEGG" id="dme:Dmel_CG9233"/>
<dbReference type="UCSC" id="CG9233-RA">
    <property type="organism name" value="d. melanogaster"/>
</dbReference>
<dbReference type="AGR" id="FB:FBgn0285971"/>
<dbReference type="CTD" id="34177"/>
<dbReference type="FlyBase" id="FBgn0285971">
    <property type="gene designation" value="prg"/>
</dbReference>
<dbReference type="VEuPathDB" id="VectorBase:FBgn0285971"/>
<dbReference type="eggNOG" id="KOG1721">
    <property type="taxonomic scope" value="Eukaryota"/>
</dbReference>
<dbReference type="GeneTree" id="ENSGT00940000164868"/>
<dbReference type="HOGENOM" id="CLU_488588_0_0_1"/>
<dbReference type="OMA" id="TCAICCI"/>
<dbReference type="OrthoDB" id="202234at2759"/>
<dbReference type="Reactome" id="R-DME-212436">
    <property type="pathway name" value="Generic Transcription Pathway"/>
</dbReference>
<dbReference type="BioGRID-ORCS" id="34177">
    <property type="hits" value="1 hit in 1 CRISPR screen"/>
</dbReference>
<dbReference type="GenomeRNAi" id="34177"/>
<dbReference type="PRO" id="PR:Q9VLK8"/>
<dbReference type="Proteomes" id="UP000000803">
    <property type="component" value="Chromosome 2L"/>
</dbReference>
<dbReference type="Bgee" id="FBgn0285971">
    <property type="expression patterns" value="Expressed in adult abdomen and 67 other cell types or tissues"/>
</dbReference>
<dbReference type="ExpressionAtlas" id="Q9VLK8">
    <property type="expression patterns" value="baseline and differential"/>
</dbReference>
<dbReference type="GO" id="GO:0005634">
    <property type="term" value="C:nucleus"/>
    <property type="evidence" value="ECO:0007669"/>
    <property type="project" value="InterPro"/>
</dbReference>
<dbReference type="GO" id="GO:0000981">
    <property type="term" value="F:DNA-binding transcription factor activity, RNA polymerase II-specific"/>
    <property type="evidence" value="ECO:0000318"/>
    <property type="project" value="GO_Central"/>
</dbReference>
<dbReference type="GO" id="GO:0000978">
    <property type="term" value="F:RNA polymerase II cis-regulatory region sequence-specific DNA binding"/>
    <property type="evidence" value="ECO:0000318"/>
    <property type="project" value="GO_Central"/>
</dbReference>
<dbReference type="GO" id="GO:0008270">
    <property type="term" value="F:zinc ion binding"/>
    <property type="evidence" value="ECO:0007669"/>
    <property type="project" value="UniProtKB-KW"/>
</dbReference>
<dbReference type="GO" id="GO:0007391">
    <property type="term" value="P:dorsal closure"/>
    <property type="evidence" value="ECO:0000315"/>
    <property type="project" value="UniProtKB"/>
</dbReference>
<dbReference type="GO" id="GO:0008258">
    <property type="term" value="P:head involution"/>
    <property type="evidence" value="ECO:0000315"/>
    <property type="project" value="UniProtKB"/>
</dbReference>
<dbReference type="GO" id="GO:0006355">
    <property type="term" value="P:regulation of DNA-templated transcription"/>
    <property type="evidence" value="ECO:0000318"/>
    <property type="project" value="GO_Central"/>
</dbReference>
<dbReference type="FunFam" id="3.30.160.60:FF:000100">
    <property type="entry name" value="Zinc finger 45-like"/>
    <property type="match status" value="1"/>
</dbReference>
<dbReference type="FunFam" id="3.30.160.60:FF:000202">
    <property type="entry name" value="Zinc finger protein 574"/>
    <property type="match status" value="1"/>
</dbReference>
<dbReference type="FunFam" id="3.30.160.60:FF:000624">
    <property type="entry name" value="zinc finger protein 697"/>
    <property type="match status" value="1"/>
</dbReference>
<dbReference type="Gene3D" id="3.40.1800.20">
    <property type="match status" value="1"/>
</dbReference>
<dbReference type="Gene3D" id="3.30.160.60">
    <property type="entry name" value="Classic Zinc Finger"/>
    <property type="match status" value="7"/>
</dbReference>
<dbReference type="InterPro" id="IPR050717">
    <property type="entry name" value="C2H2-ZF_Transcription_Reg"/>
</dbReference>
<dbReference type="InterPro" id="IPR012934">
    <property type="entry name" value="Znf_AD"/>
</dbReference>
<dbReference type="InterPro" id="IPR036236">
    <property type="entry name" value="Znf_C2H2_sf"/>
</dbReference>
<dbReference type="InterPro" id="IPR013087">
    <property type="entry name" value="Znf_C2H2_type"/>
</dbReference>
<dbReference type="PANTHER" id="PTHR14196">
    <property type="entry name" value="ODD-SKIPPED - RELATED"/>
    <property type="match status" value="1"/>
</dbReference>
<dbReference type="PANTHER" id="PTHR14196:SF12">
    <property type="entry name" value="ZINC FINGER PROTEIN 208-LIKE"/>
    <property type="match status" value="1"/>
</dbReference>
<dbReference type="Pfam" id="PF07776">
    <property type="entry name" value="zf-AD"/>
    <property type="match status" value="1"/>
</dbReference>
<dbReference type="Pfam" id="PF00096">
    <property type="entry name" value="zf-C2H2"/>
    <property type="match status" value="5"/>
</dbReference>
<dbReference type="Pfam" id="PF13912">
    <property type="entry name" value="zf-C2H2_6"/>
    <property type="match status" value="1"/>
</dbReference>
<dbReference type="SMART" id="SM00868">
    <property type="entry name" value="zf-AD"/>
    <property type="match status" value="1"/>
</dbReference>
<dbReference type="SMART" id="SM00355">
    <property type="entry name" value="ZnF_C2H2"/>
    <property type="match status" value="9"/>
</dbReference>
<dbReference type="SUPFAM" id="SSF57667">
    <property type="entry name" value="beta-beta-alpha zinc fingers"/>
    <property type="match status" value="4"/>
</dbReference>
<dbReference type="SUPFAM" id="SSF57716">
    <property type="entry name" value="Glucocorticoid receptor-like (DNA-binding domain)"/>
    <property type="match status" value="1"/>
</dbReference>
<dbReference type="PROSITE" id="PS51915">
    <property type="entry name" value="ZAD"/>
    <property type="match status" value="1"/>
</dbReference>
<dbReference type="PROSITE" id="PS00028">
    <property type="entry name" value="ZINC_FINGER_C2H2_1"/>
    <property type="match status" value="9"/>
</dbReference>
<dbReference type="PROSITE" id="PS50157">
    <property type="entry name" value="ZINC_FINGER_C2H2_2"/>
    <property type="match status" value="8"/>
</dbReference>
<gene>
    <name evidence="6 11" type="primary">prg</name>
    <name evidence="9" type="synonym">FU12</name>
    <name evidence="7" type="synonym">fu2</name>
    <name evidence="9" type="synonym">pra</name>
    <name evidence="11" type="ORF">CG9233</name>
</gene>
<feature type="chain" id="PRO_0000459129" description="Zinc finger protein piragua">
    <location>
        <begin position="1"/>
        <end position="558"/>
    </location>
</feature>
<feature type="domain" description="ZAD" evidence="2">
    <location>
        <begin position="15"/>
        <end position="94"/>
    </location>
</feature>
<feature type="zinc finger region" description="C2H2-type 1" evidence="1">
    <location>
        <begin position="208"/>
        <end position="231"/>
    </location>
</feature>
<feature type="zinc finger region" description="C2H2-type 2" evidence="1">
    <location>
        <begin position="237"/>
        <end position="260"/>
    </location>
</feature>
<feature type="zinc finger region" description="C2H2-type 3" evidence="1">
    <location>
        <begin position="266"/>
        <end position="288"/>
    </location>
</feature>
<feature type="zinc finger region" description="C2H2-type 4" evidence="1">
    <location>
        <begin position="294"/>
        <end position="316"/>
    </location>
</feature>
<feature type="zinc finger region" description="C2H2-type 5" evidence="1">
    <location>
        <begin position="322"/>
        <end position="344"/>
    </location>
</feature>
<feature type="zinc finger region" description="C2H2-type 6" evidence="1">
    <location>
        <begin position="350"/>
        <end position="372"/>
    </location>
</feature>
<feature type="zinc finger region" description="C2H2-type 7" evidence="1">
    <location>
        <begin position="414"/>
        <end position="436"/>
    </location>
</feature>
<feature type="zinc finger region" description="C2H2-type 8" evidence="1">
    <location>
        <begin position="441"/>
        <end position="464"/>
    </location>
</feature>
<feature type="zinc finger region" description="C2H2-type 9" evidence="1">
    <location>
        <begin position="468"/>
        <end position="490"/>
    </location>
</feature>
<feature type="region of interest" description="Disordered" evidence="3">
    <location>
        <begin position="132"/>
        <end position="178"/>
    </location>
</feature>
<feature type="compositionally biased region" description="Acidic residues" evidence="3">
    <location>
        <begin position="132"/>
        <end position="177"/>
    </location>
</feature>
<feature type="binding site" evidence="2">
    <location>
        <position position="17"/>
    </location>
    <ligand>
        <name>Zn(2+)</name>
        <dbReference type="ChEBI" id="CHEBI:29105"/>
    </ligand>
</feature>
<feature type="binding site" evidence="2">
    <location>
        <position position="20"/>
    </location>
    <ligand>
        <name>Zn(2+)</name>
        <dbReference type="ChEBI" id="CHEBI:29105"/>
    </ligand>
</feature>
<feature type="binding site" evidence="2">
    <location>
        <position position="67"/>
    </location>
    <ligand>
        <name>Zn(2+)</name>
        <dbReference type="ChEBI" id="CHEBI:29105"/>
    </ligand>
</feature>
<feature type="binding site" evidence="2">
    <location>
        <position position="70"/>
    </location>
    <ligand>
        <name>Zn(2+)</name>
        <dbReference type="ChEBI" id="CHEBI:29105"/>
    </ligand>
</feature>